<gene>
    <name type="primary">HOXA7</name>
</gene>
<feature type="chain" id="PRO_0000285421" description="Homeobox protein Hox-A7">
    <location>
        <begin position="1"/>
        <end position="230"/>
    </location>
</feature>
<feature type="DNA-binding region" description="Homeobox" evidence="2">
    <location>
        <begin position="130"/>
        <end position="189"/>
    </location>
</feature>
<feature type="region of interest" description="Disordered" evidence="3">
    <location>
        <begin position="187"/>
        <end position="230"/>
    </location>
</feature>
<feature type="short sequence motif" description="Antp-type hexapeptide">
    <location>
        <begin position="119"/>
        <end position="124"/>
    </location>
</feature>
<feature type="compositionally biased region" description="Low complexity" evidence="3">
    <location>
        <begin position="194"/>
        <end position="213"/>
    </location>
</feature>
<feature type="compositionally biased region" description="Acidic residues" evidence="3">
    <location>
        <begin position="216"/>
        <end position="230"/>
    </location>
</feature>
<accession>A2T7F3</accession>
<comment type="function">
    <text evidence="1">Sequence-specific transcription factor which is part of a developmental regulatory system that provides cells with specific positional identities on the anterior-posterior axis.</text>
</comment>
<comment type="subcellular location">
    <subcellularLocation>
        <location evidence="2">Nucleus</location>
    </subcellularLocation>
</comment>
<comment type="similarity">
    <text evidence="4">Belongs to the Antp homeobox family.</text>
</comment>
<organism>
    <name type="scientific">Pan troglodytes</name>
    <name type="common">Chimpanzee</name>
    <dbReference type="NCBI Taxonomy" id="9598"/>
    <lineage>
        <taxon>Eukaryota</taxon>
        <taxon>Metazoa</taxon>
        <taxon>Chordata</taxon>
        <taxon>Craniata</taxon>
        <taxon>Vertebrata</taxon>
        <taxon>Euteleostomi</taxon>
        <taxon>Mammalia</taxon>
        <taxon>Eutheria</taxon>
        <taxon>Euarchontoglires</taxon>
        <taxon>Primates</taxon>
        <taxon>Haplorrhini</taxon>
        <taxon>Catarrhini</taxon>
        <taxon>Hominidae</taxon>
        <taxon>Pan</taxon>
    </lineage>
</organism>
<dbReference type="EMBL" id="DQ977437">
    <property type="protein sequence ID" value="ABM92108.1"/>
    <property type="molecule type" value="Genomic_DNA"/>
</dbReference>
<dbReference type="RefSeq" id="NP_001129067.1">
    <property type="nucleotide sequence ID" value="NM_001135595.1"/>
</dbReference>
<dbReference type="STRING" id="9598.ENSPTRP00000032500"/>
<dbReference type="PaxDb" id="9598-ENSPTRP00000032500"/>
<dbReference type="GeneID" id="745634"/>
<dbReference type="CTD" id="3204"/>
<dbReference type="eggNOG" id="KOG0489">
    <property type="taxonomic scope" value="Eukaryota"/>
</dbReference>
<dbReference type="InParanoid" id="A2T7F3"/>
<dbReference type="Proteomes" id="UP000002277">
    <property type="component" value="Unplaced"/>
</dbReference>
<dbReference type="GO" id="GO:0005634">
    <property type="term" value="C:nucleus"/>
    <property type="evidence" value="ECO:0000318"/>
    <property type="project" value="GO_Central"/>
</dbReference>
<dbReference type="GO" id="GO:0000981">
    <property type="term" value="F:DNA-binding transcription factor activity, RNA polymerase II-specific"/>
    <property type="evidence" value="ECO:0000318"/>
    <property type="project" value="GO_Central"/>
</dbReference>
<dbReference type="GO" id="GO:0000978">
    <property type="term" value="F:RNA polymerase II cis-regulatory region sequence-specific DNA binding"/>
    <property type="evidence" value="ECO:0000318"/>
    <property type="project" value="GO_Central"/>
</dbReference>
<dbReference type="GO" id="GO:0009952">
    <property type="term" value="P:anterior/posterior pattern specification"/>
    <property type="evidence" value="ECO:0000318"/>
    <property type="project" value="GO_Central"/>
</dbReference>
<dbReference type="GO" id="GO:0006357">
    <property type="term" value="P:regulation of transcription by RNA polymerase II"/>
    <property type="evidence" value="ECO:0000318"/>
    <property type="project" value="GO_Central"/>
</dbReference>
<dbReference type="CDD" id="cd00086">
    <property type="entry name" value="homeodomain"/>
    <property type="match status" value="1"/>
</dbReference>
<dbReference type="FunFam" id="1.10.10.60:FF:000017">
    <property type="entry name" value="Homeobox protein antennapedia"/>
    <property type="match status" value="1"/>
</dbReference>
<dbReference type="Gene3D" id="1.10.10.60">
    <property type="entry name" value="Homeodomain-like"/>
    <property type="match status" value="1"/>
</dbReference>
<dbReference type="InterPro" id="IPR050296">
    <property type="entry name" value="Antp_homeobox"/>
</dbReference>
<dbReference type="InterPro" id="IPR001356">
    <property type="entry name" value="HD"/>
</dbReference>
<dbReference type="InterPro" id="IPR020479">
    <property type="entry name" value="HD_metazoa"/>
</dbReference>
<dbReference type="InterPro" id="IPR017995">
    <property type="entry name" value="Homeobox_antennapedia"/>
</dbReference>
<dbReference type="InterPro" id="IPR001827">
    <property type="entry name" value="Homeobox_Antennapedia_CS"/>
</dbReference>
<dbReference type="InterPro" id="IPR017970">
    <property type="entry name" value="Homeobox_CS"/>
</dbReference>
<dbReference type="InterPro" id="IPR009057">
    <property type="entry name" value="Homeodomain-like_sf"/>
</dbReference>
<dbReference type="PANTHER" id="PTHR45659">
    <property type="entry name" value="HOMEOBOX PROTEIN HOX"/>
    <property type="match status" value="1"/>
</dbReference>
<dbReference type="PANTHER" id="PTHR45659:SF12">
    <property type="entry name" value="HOMEOBOX PROTEIN HOX-A7"/>
    <property type="match status" value="1"/>
</dbReference>
<dbReference type="Pfam" id="PF00046">
    <property type="entry name" value="Homeodomain"/>
    <property type="match status" value="1"/>
</dbReference>
<dbReference type="PRINTS" id="PR00025">
    <property type="entry name" value="ANTENNAPEDIA"/>
</dbReference>
<dbReference type="PRINTS" id="PR00024">
    <property type="entry name" value="HOMEOBOX"/>
</dbReference>
<dbReference type="SMART" id="SM00389">
    <property type="entry name" value="HOX"/>
    <property type="match status" value="1"/>
</dbReference>
<dbReference type="SUPFAM" id="SSF46689">
    <property type="entry name" value="Homeodomain-like"/>
    <property type="match status" value="1"/>
</dbReference>
<dbReference type="PROSITE" id="PS00032">
    <property type="entry name" value="ANTENNAPEDIA"/>
    <property type="match status" value="1"/>
</dbReference>
<dbReference type="PROSITE" id="PS00027">
    <property type="entry name" value="HOMEOBOX_1"/>
    <property type="match status" value="1"/>
</dbReference>
<dbReference type="PROSITE" id="PS50071">
    <property type="entry name" value="HOMEOBOX_2"/>
    <property type="match status" value="1"/>
</dbReference>
<name>HXA7_PANTR</name>
<evidence type="ECO:0000250" key="1"/>
<evidence type="ECO:0000255" key="2">
    <source>
        <dbReference type="PROSITE-ProRule" id="PRU00108"/>
    </source>
</evidence>
<evidence type="ECO:0000256" key="3">
    <source>
        <dbReference type="SAM" id="MobiDB-lite"/>
    </source>
</evidence>
<evidence type="ECO:0000305" key="4"/>
<keyword id="KW-0217">Developmental protein</keyword>
<keyword id="KW-0238">DNA-binding</keyword>
<keyword id="KW-0371">Homeobox</keyword>
<keyword id="KW-0539">Nucleus</keyword>
<keyword id="KW-1185">Reference proteome</keyword>
<keyword id="KW-0804">Transcription</keyword>
<keyword id="KW-0805">Transcription regulation</keyword>
<proteinExistence type="inferred from homology"/>
<reference key="1">
    <citation type="submission" date="2006-08" db="EMBL/GenBank/DDBJ databases">
        <title>Positive selection in transcription factor genes on the human lineage.</title>
        <authorList>
            <person name="Nickel G.C."/>
            <person name="Tefft D.L."/>
            <person name="Trevarthen K."/>
            <person name="Funt J."/>
            <person name="Adams M.D."/>
        </authorList>
    </citation>
    <scope>NUCLEOTIDE SEQUENCE [GENOMIC DNA]</scope>
</reference>
<sequence>MSSSYYVNALFSKYTAGASLFQNAEPTSCSFAPNSQRSGYGAGAGAFASTVPGLYNVNSPLYXSPFASGYGLGADAYGNLPCASYDQNIPGLCSDLAKGACDKADEGALHGAAEANFRIYPWMRSSGPDRKRGRQTYTRYQTLELEKEFHFNRYLTRRRRIEIAHALCLTERQIKIWFQNRRMKWKKEHKDDGPTAAAAPEGAVPSAAATAAADKADEEDDDEEEEDEEE</sequence>
<protein>
    <recommendedName>
        <fullName>Homeobox protein Hox-A7</fullName>
    </recommendedName>
</protein>